<keyword id="KW-0349">Heme</keyword>
<keyword id="KW-0408">Iron</keyword>
<keyword id="KW-0472">Membrane</keyword>
<keyword id="KW-0479">Metal-binding</keyword>
<keyword id="KW-0503">Monooxygenase</keyword>
<keyword id="KW-0560">Oxidoreductase</keyword>
<keyword id="KW-1185">Reference proteome</keyword>
<keyword id="KW-0812">Transmembrane</keyword>
<keyword id="KW-1133">Transmembrane helix</keyword>
<organism>
    <name type="scientific">Aspergillus calidoustus</name>
    <dbReference type="NCBI Taxonomy" id="454130"/>
    <lineage>
        <taxon>Eukaryota</taxon>
        <taxon>Fungi</taxon>
        <taxon>Dikarya</taxon>
        <taxon>Ascomycota</taxon>
        <taxon>Pezizomycotina</taxon>
        <taxon>Eurotiomycetes</taxon>
        <taxon>Eurotiomycetidae</taxon>
        <taxon>Eurotiales</taxon>
        <taxon>Aspergillaceae</taxon>
        <taxon>Aspergillus</taxon>
        <taxon>Aspergillus subgen. Nidulantes</taxon>
    </lineage>
</organism>
<reference key="1">
    <citation type="journal article" date="2016" name="Genome Announc.">
        <title>Draft genome sequences of fungus Aspergillus calidoustus.</title>
        <authorList>
            <person name="Horn F."/>
            <person name="Linde J."/>
            <person name="Mattern D.J."/>
            <person name="Walther G."/>
            <person name="Guthke R."/>
            <person name="Scherlach K."/>
            <person name="Martin K."/>
            <person name="Brakhage A.A."/>
            <person name="Petzke L."/>
            <person name="Valiante V."/>
        </authorList>
    </citation>
    <scope>NUCLEOTIDE SEQUENCE [LARGE SCALE GENOMIC DNA]</scope>
    <source>
        <strain>SF006504</strain>
    </source>
</reference>
<reference key="2">
    <citation type="journal article" date="2017" name="ACS Chem. Biol.">
        <title>Discovery of an Extended Austinoid Biosynthetic Pathway in Aspergillus calidoustus.</title>
        <authorList>
            <person name="Valiante V."/>
            <person name="Mattern D.J."/>
            <person name="Schueffler A."/>
            <person name="Horn F."/>
            <person name="Walther G."/>
            <person name="Scherlach K."/>
            <person name="Petzke L."/>
            <person name="Dickhaut J."/>
            <person name="Guthke R."/>
            <person name="Hertweck C."/>
            <person name="Nett M."/>
            <person name="Thines E."/>
            <person name="Brakhage A.A."/>
        </authorList>
    </citation>
    <scope>FUNCTION</scope>
    <scope>PATHWAY</scope>
</reference>
<reference key="3">
    <citation type="journal article" date="2017" name="ACS Chem. Biol.">
        <title>Rewiring of the austinoid biosynthetic pathway in filamentous fungi.</title>
        <authorList>
            <person name="Mattern D.J."/>
            <person name="Valiante V."/>
            <person name="Horn F."/>
            <person name="Petzke L."/>
            <person name="Brakhage A.A."/>
        </authorList>
    </citation>
    <scope>FUNCTION</scope>
</reference>
<name>AUSG_ASPCI</name>
<accession>A0A0U4ZPJ7</accession>
<evidence type="ECO:0000250" key="1">
    <source>
        <dbReference type="UniProtKB" id="P04798"/>
    </source>
</evidence>
<evidence type="ECO:0000250" key="2">
    <source>
        <dbReference type="UniProtKB" id="Q5AR32"/>
    </source>
</evidence>
<evidence type="ECO:0000255" key="3"/>
<evidence type="ECO:0000269" key="4">
    <source>
    </source>
</evidence>
<evidence type="ECO:0000269" key="5">
    <source>
    </source>
</evidence>
<evidence type="ECO:0000303" key="6">
    <source>
    </source>
</evidence>
<evidence type="ECO:0000305" key="7"/>
<evidence type="ECO:0000305" key="8">
    <source>
    </source>
</evidence>
<evidence type="ECO:0000305" key="9">
    <source>
    </source>
</evidence>
<dbReference type="EC" id="1.-.-.-" evidence="8"/>
<dbReference type="EMBL" id="CDMC01000024">
    <property type="protein sequence ID" value="CEL11253.1"/>
    <property type="molecule type" value="Genomic_DNA"/>
</dbReference>
<dbReference type="SMR" id="A0A0U4ZPJ7"/>
<dbReference type="STRING" id="454130.A0A0U4ZPJ7"/>
<dbReference type="OMA" id="IEWFERT"/>
<dbReference type="OrthoDB" id="1844152at2759"/>
<dbReference type="UniPathway" id="UPA00213"/>
<dbReference type="Proteomes" id="UP000054771">
    <property type="component" value="Unassembled WGS sequence"/>
</dbReference>
<dbReference type="GO" id="GO:0016020">
    <property type="term" value="C:membrane"/>
    <property type="evidence" value="ECO:0007669"/>
    <property type="project" value="UniProtKB-SubCell"/>
</dbReference>
<dbReference type="GO" id="GO:0020037">
    <property type="term" value="F:heme binding"/>
    <property type="evidence" value="ECO:0007669"/>
    <property type="project" value="InterPro"/>
</dbReference>
<dbReference type="GO" id="GO:0005506">
    <property type="term" value="F:iron ion binding"/>
    <property type="evidence" value="ECO:0007669"/>
    <property type="project" value="InterPro"/>
</dbReference>
<dbReference type="GO" id="GO:0004497">
    <property type="term" value="F:monooxygenase activity"/>
    <property type="evidence" value="ECO:0007669"/>
    <property type="project" value="UniProtKB-KW"/>
</dbReference>
<dbReference type="GO" id="GO:0016705">
    <property type="term" value="F:oxidoreductase activity, acting on paired donors, with incorporation or reduction of molecular oxygen"/>
    <property type="evidence" value="ECO:0007669"/>
    <property type="project" value="InterPro"/>
</dbReference>
<dbReference type="GO" id="GO:0019748">
    <property type="term" value="P:secondary metabolic process"/>
    <property type="evidence" value="ECO:0007669"/>
    <property type="project" value="UniProtKB-ARBA"/>
</dbReference>
<dbReference type="GO" id="GO:0016114">
    <property type="term" value="P:terpenoid biosynthetic process"/>
    <property type="evidence" value="ECO:0007669"/>
    <property type="project" value="UniProtKB-UniPathway"/>
</dbReference>
<dbReference type="CDD" id="cd11041">
    <property type="entry name" value="CYP503A1-like"/>
    <property type="match status" value="1"/>
</dbReference>
<dbReference type="FunFam" id="1.10.630.10:FF:000059">
    <property type="entry name" value="Cytochrome P450 monooxygenase"/>
    <property type="match status" value="1"/>
</dbReference>
<dbReference type="Gene3D" id="1.10.630.10">
    <property type="entry name" value="Cytochrome P450"/>
    <property type="match status" value="1"/>
</dbReference>
<dbReference type="InterPro" id="IPR001128">
    <property type="entry name" value="Cyt_P450"/>
</dbReference>
<dbReference type="InterPro" id="IPR017972">
    <property type="entry name" value="Cyt_P450_CS"/>
</dbReference>
<dbReference type="InterPro" id="IPR002403">
    <property type="entry name" value="Cyt_P450_E_grp-IV"/>
</dbReference>
<dbReference type="InterPro" id="IPR036396">
    <property type="entry name" value="Cyt_P450_sf"/>
</dbReference>
<dbReference type="PANTHER" id="PTHR46206">
    <property type="entry name" value="CYTOCHROME P450"/>
    <property type="match status" value="1"/>
</dbReference>
<dbReference type="PANTHER" id="PTHR46206:SF2">
    <property type="entry name" value="CYTOCHROME P450 MONOOXYGENASE AUSG-RELATED"/>
    <property type="match status" value="1"/>
</dbReference>
<dbReference type="Pfam" id="PF00067">
    <property type="entry name" value="p450"/>
    <property type="match status" value="1"/>
</dbReference>
<dbReference type="PRINTS" id="PR00465">
    <property type="entry name" value="EP450IV"/>
</dbReference>
<dbReference type="SUPFAM" id="SSF48264">
    <property type="entry name" value="Cytochrome P450"/>
    <property type="match status" value="1"/>
</dbReference>
<dbReference type="PROSITE" id="PS00086">
    <property type="entry name" value="CYTOCHROME_P450"/>
    <property type="match status" value="1"/>
</dbReference>
<comment type="function">
    <text evidence="2 4 5">Cytochrome P450 monooxygenase; part of the gene cluster that mediates the biosynthesis of calidodehydroaustin, a fungal meroterpenoid (PubMed:28233494, PubMed:29076725). The first step of the pathway is the synthesis of 3,5-dimethylorsellinic acid by the polyketide synthase ausA (PubMed:28233494). 3,5-dimethylorsellinic acid is then prenylated by the polyprenyl transferase ausN (PubMed:28233494). Further epoxidation by the FAD-dependent monooxygenase ausM and cyclization by the probable terpene cyclase ausL lead to the formation of protoaustinoid A (By similarity). Protoaustinoid A is then oxidized to spiro-lactone preaustinoid A3 by the combined action of the FAD-binding monooxygenases ausB and ausC, and the dioxygenase ausE (By similarity). Acid-catalyzed keto-rearrangement and ring contraction of the tetraketide portion of preaustinoid A3 by ausJ lead to the formation of preaustinoid A4 (By similarity). The aldo-keto reductase ausK, with the help of ausH, is involved in the next step by transforming preaustinoid A4 into isoaustinone which is in turn hydroxylated by the P450 monooxygenase ausI to form austinolide (By similarity). The cytochrome P450 monooxygenase ausG modifies austinolide to austinol (By similarity). Austinol is further acetylated to austin by the O-acetyltransferase ausP, which spontaneously changes to dehydroaustin (PubMed:28233494). The cytochrome P450 monooxygenase ausR then converts dehydroaustin is into 7-dehydrodehydroaustin (PubMed:28233494). The hydroxylation catalyzed by ausR permits the O-acetyltransferase ausQ to add an additional acetyl group to the molecule, leading to the formation of acetoxydehydroaustin (PubMed:28233494). The short chain dehydrogenase ausT catalyzes the reduction of the double bond present between carbon atoms 1 and 2 to convert 7-dehydrodehydroaustin into 1,2-dihydro-7-hydroxydehydroaustin (PubMed:28233494). AusQ catalyzes not only an acetylation reaction but also the addition of the PKS ausV diketide product to 1,2-dihydro-7-hydroxydehydroaustin, forming precalidodehydroaustin (PubMed:28233494). Finally, the iron/alpha-ketoglutarate-dependent dioxygenase converts precalidodehydroaustin into calidodehydroaustin (PubMed:28233494).</text>
</comment>
<comment type="cofactor">
    <cofactor evidence="1">
        <name>heme</name>
        <dbReference type="ChEBI" id="CHEBI:30413"/>
    </cofactor>
</comment>
<comment type="pathway">
    <text evidence="8">Secondary metabolite biosynthesis; terpenoid biosynthesis.</text>
</comment>
<comment type="subcellular location">
    <subcellularLocation>
        <location evidence="3">Membrane</location>
        <topology evidence="3">Single-pass membrane protein</topology>
    </subcellularLocation>
</comment>
<comment type="miscellaneous">
    <text evidence="9">In A.calidoustus, the austinoid gene cluster lies on a contiguous DNA region, while clusters from E.nidulans and P.brasilianum are split in their respective genomes. Genetic rearrangements provoked variability among the clusters and E.nidulans produces the least number of austionoid derivatives with the end products austinol and dehydroaustinol, while P.brasilianum can produce until acetoxydehydroaustin, and A.calidoustus produces the highest number of identified derivatives.</text>
</comment>
<comment type="similarity">
    <text evidence="7">Belongs to the cytochrome P450 family.</text>
</comment>
<gene>
    <name evidence="6" type="primary">ausG</name>
    <name type="ORF">ASPCAL14356</name>
</gene>
<proteinExistence type="inferred from homology"/>
<sequence>MAMGNPGLWTHFSRSPRELRIPNDLELPNGLLVVCGLPGLLLLFFVTAILLYPFRNKSDLPLINPGKGRIGILRGYRARKTFAAELPRLVTEGLSKASAFRIAAPDGVNIVLAPRYAHEIAEHPDLNPGPIAGDEFNCHIDGFEVFAQLGTSDVIAESVRTRLTRQLTKLTPLLTTETPLLLQSQWKDAPTWVEVSPHETALFILSRLSSLVFVGDDLGRNPDWVHILTSYNTEAFAAAQELNLWPQILRPLVARLKPSCRQLRRYIRDARALLVPVIEQRRHAQSHGDRREYNDAIEWLDQTSRSAGQPYDPLLSQMLLAIGSFHTSSDLLGQVLLDLCSRRDWEVLARELRKEIISSLQGAGWDKIALNNLKLMDSVLKESQRLKPASTVTMGRYASREIRLSDGTAIPKGSTVFIANVAMRDPKIYPEPDAFIPDRFTTRREKGDSSAYLVSASPEHIGFGLGRHACPGRFFAANEVKIVLSHMLLKYDIKFPDNGAAAPSTSGIFLETNPDARICVRRRKEEIVI</sequence>
<protein>
    <recommendedName>
        <fullName evidence="6">Cytochrome P450 monooxygenase ausG</fullName>
        <ecNumber evidence="8">1.-.-.-</ecNumber>
    </recommendedName>
    <alternativeName>
        <fullName evidence="6">Austinoid biosynthesis cluster protein G</fullName>
    </alternativeName>
</protein>
<feature type="chain" id="PRO_0000453837" description="Cytochrome P450 monooxygenase ausG">
    <location>
        <begin position="1"/>
        <end position="529"/>
    </location>
</feature>
<feature type="transmembrane region" description="Helical" evidence="3">
    <location>
        <begin position="31"/>
        <end position="51"/>
    </location>
</feature>
<feature type="binding site" description="axial binding residue" evidence="1">
    <location>
        <position position="470"/>
    </location>
    <ligand>
        <name>heme</name>
        <dbReference type="ChEBI" id="CHEBI:30413"/>
    </ligand>
    <ligandPart>
        <name>Fe</name>
        <dbReference type="ChEBI" id="CHEBI:18248"/>
    </ligandPart>
</feature>